<organism>
    <name type="scientific">Yersinia pseudotuberculosis serotype O:1b (strain IP 31758)</name>
    <dbReference type="NCBI Taxonomy" id="349747"/>
    <lineage>
        <taxon>Bacteria</taxon>
        <taxon>Pseudomonadati</taxon>
        <taxon>Pseudomonadota</taxon>
        <taxon>Gammaproteobacteria</taxon>
        <taxon>Enterobacterales</taxon>
        <taxon>Yersiniaceae</taxon>
        <taxon>Yersinia</taxon>
    </lineage>
</organism>
<feature type="chain" id="PRO_1000062026" description="5-oxoprolinase subunit A">
    <location>
        <begin position="1"/>
        <end position="245"/>
    </location>
</feature>
<accession>A7FFS0</accession>
<name>PXPA_YERP3</name>
<protein>
    <recommendedName>
        <fullName evidence="1">5-oxoprolinase subunit A</fullName>
        <shortName evidence="1">5-OPase subunit A</shortName>
        <ecNumber evidence="1">3.5.2.9</ecNumber>
    </recommendedName>
    <alternativeName>
        <fullName evidence="1">5-oxoprolinase (ATP-hydrolyzing) subunit A</fullName>
    </alternativeName>
</protein>
<comment type="function">
    <text evidence="1">Catalyzes the cleavage of 5-oxoproline to form L-glutamate coupled to the hydrolysis of ATP to ADP and inorganic phosphate.</text>
</comment>
<comment type="catalytic activity">
    <reaction evidence="1">
        <text>5-oxo-L-proline + ATP + 2 H2O = L-glutamate + ADP + phosphate + H(+)</text>
        <dbReference type="Rhea" id="RHEA:10348"/>
        <dbReference type="ChEBI" id="CHEBI:15377"/>
        <dbReference type="ChEBI" id="CHEBI:15378"/>
        <dbReference type="ChEBI" id="CHEBI:29985"/>
        <dbReference type="ChEBI" id="CHEBI:30616"/>
        <dbReference type="ChEBI" id="CHEBI:43474"/>
        <dbReference type="ChEBI" id="CHEBI:58402"/>
        <dbReference type="ChEBI" id="CHEBI:456216"/>
        <dbReference type="EC" id="3.5.2.9"/>
    </reaction>
</comment>
<comment type="subunit">
    <text evidence="1">Forms a complex composed of PxpA, PxpB and PxpC.</text>
</comment>
<comment type="similarity">
    <text evidence="1">Belongs to the LamB/PxpA family.</text>
</comment>
<reference key="1">
    <citation type="journal article" date="2007" name="PLoS Genet.">
        <title>The complete genome sequence of Yersinia pseudotuberculosis IP31758, the causative agent of Far East scarlet-like fever.</title>
        <authorList>
            <person name="Eppinger M."/>
            <person name="Rosovitz M.J."/>
            <person name="Fricke W.F."/>
            <person name="Rasko D.A."/>
            <person name="Kokorina G."/>
            <person name="Fayolle C."/>
            <person name="Lindler L.E."/>
            <person name="Carniel E."/>
            <person name="Ravel J."/>
        </authorList>
    </citation>
    <scope>NUCLEOTIDE SEQUENCE [LARGE SCALE GENOMIC DNA]</scope>
    <source>
        <strain>IP 31758</strain>
    </source>
</reference>
<evidence type="ECO:0000255" key="1">
    <source>
        <dbReference type="HAMAP-Rule" id="MF_00691"/>
    </source>
</evidence>
<proteinExistence type="inferred from homology"/>
<gene>
    <name evidence="1" type="primary">pxpA</name>
    <name type="ordered locus">YpsIP31758_1117</name>
</gene>
<dbReference type="EC" id="3.5.2.9" evidence="1"/>
<dbReference type="EMBL" id="CP000720">
    <property type="protein sequence ID" value="ABS46722.1"/>
    <property type="molecule type" value="Genomic_DNA"/>
</dbReference>
<dbReference type="RefSeq" id="WP_002209659.1">
    <property type="nucleotide sequence ID" value="NC_009708.1"/>
</dbReference>
<dbReference type="SMR" id="A7FFS0"/>
<dbReference type="GeneID" id="57975991"/>
<dbReference type="KEGG" id="ypi:YpsIP31758_1117"/>
<dbReference type="HOGENOM" id="CLU_069535_0_0_6"/>
<dbReference type="Proteomes" id="UP000002412">
    <property type="component" value="Chromosome"/>
</dbReference>
<dbReference type="GO" id="GO:0017168">
    <property type="term" value="F:5-oxoprolinase (ATP-hydrolyzing) activity"/>
    <property type="evidence" value="ECO:0007669"/>
    <property type="project" value="UniProtKB-UniRule"/>
</dbReference>
<dbReference type="GO" id="GO:0005524">
    <property type="term" value="F:ATP binding"/>
    <property type="evidence" value="ECO:0007669"/>
    <property type="project" value="UniProtKB-UniRule"/>
</dbReference>
<dbReference type="GO" id="GO:0005975">
    <property type="term" value="P:carbohydrate metabolic process"/>
    <property type="evidence" value="ECO:0007669"/>
    <property type="project" value="InterPro"/>
</dbReference>
<dbReference type="CDD" id="cd10800">
    <property type="entry name" value="LamB_YcsF_YbgL_like"/>
    <property type="match status" value="1"/>
</dbReference>
<dbReference type="Gene3D" id="3.20.20.370">
    <property type="entry name" value="Glycoside hydrolase/deacetylase"/>
    <property type="match status" value="1"/>
</dbReference>
<dbReference type="HAMAP" id="MF_00691">
    <property type="entry name" value="PxpA"/>
    <property type="match status" value="1"/>
</dbReference>
<dbReference type="InterPro" id="IPR011330">
    <property type="entry name" value="Glyco_hydro/deAcase_b/a-brl"/>
</dbReference>
<dbReference type="InterPro" id="IPR005501">
    <property type="entry name" value="LamB/YcsF/PxpA-like"/>
</dbReference>
<dbReference type="NCBIfam" id="NF003812">
    <property type="entry name" value="PRK05406.1-1"/>
    <property type="match status" value="1"/>
</dbReference>
<dbReference type="NCBIfam" id="NF003814">
    <property type="entry name" value="PRK05406.1-3"/>
    <property type="match status" value="1"/>
</dbReference>
<dbReference type="NCBIfam" id="NF003815">
    <property type="entry name" value="PRK05406.1-4"/>
    <property type="match status" value="1"/>
</dbReference>
<dbReference type="NCBIfam" id="NF003816">
    <property type="entry name" value="PRK05406.1-5"/>
    <property type="match status" value="1"/>
</dbReference>
<dbReference type="PANTHER" id="PTHR30292:SF0">
    <property type="entry name" value="5-OXOPROLINASE SUBUNIT A"/>
    <property type="match status" value="1"/>
</dbReference>
<dbReference type="PANTHER" id="PTHR30292">
    <property type="entry name" value="UNCHARACTERIZED PROTEIN YBGL-RELATED"/>
    <property type="match status" value="1"/>
</dbReference>
<dbReference type="Pfam" id="PF03746">
    <property type="entry name" value="LamB_YcsF"/>
    <property type="match status" value="1"/>
</dbReference>
<dbReference type="SUPFAM" id="SSF88713">
    <property type="entry name" value="Glycoside hydrolase/deacetylase"/>
    <property type="match status" value="1"/>
</dbReference>
<keyword id="KW-0067">ATP-binding</keyword>
<keyword id="KW-0378">Hydrolase</keyword>
<keyword id="KW-0547">Nucleotide-binding</keyword>
<sequence length="245" mass="26281">MKIDLNADLGEGCANDQALLQLVSSANIACGFHAGDAQTMRQSVRWALEYGVAIGAHPSFPDRENFGRTAMQLPPETVYAQVVYQLGALAAIVQVEGGVMQHVKPHGMLYNQAAVDPLLADAIAQAVKAVDPSLRLVGLAGSELIRAGTRVGLVTRQEVFADRHYQPDGTLVPRSQPDALIESDELALSQTLAMVQQHQVQACDGSWVQVQADTVCVHGDGVQALAFARCLRDRFQQEGISVIAQ</sequence>